<organism>
    <name type="scientific">Acidovorax ebreus (strain TPSY)</name>
    <name type="common">Diaphorobacter sp. (strain TPSY)</name>
    <dbReference type="NCBI Taxonomy" id="535289"/>
    <lineage>
        <taxon>Bacteria</taxon>
        <taxon>Pseudomonadati</taxon>
        <taxon>Pseudomonadota</taxon>
        <taxon>Betaproteobacteria</taxon>
        <taxon>Burkholderiales</taxon>
        <taxon>Comamonadaceae</taxon>
        <taxon>Diaphorobacter</taxon>
    </lineage>
</organism>
<reference key="1">
    <citation type="submission" date="2009-01" db="EMBL/GenBank/DDBJ databases">
        <title>Complete sequence of Diaphorobacter sp. TPSY.</title>
        <authorList>
            <consortium name="US DOE Joint Genome Institute"/>
            <person name="Lucas S."/>
            <person name="Copeland A."/>
            <person name="Lapidus A."/>
            <person name="Glavina del Rio T."/>
            <person name="Tice H."/>
            <person name="Bruce D."/>
            <person name="Goodwin L."/>
            <person name="Pitluck S."/>
            <person name="Chertkov O."/>
            <person name="Brettin T."/>
            <person name="Detter J.C."/>
            <person name="Han C."/>
            <person name="Larimer F."/>
            <person name="Land M."/>
            <person name="Hauser L."/>
            <person name="Kyrpides N."/>
            <person name="Mikhailova N."/>
            <person name="Coates J.D."/>
        </authorList>
    </citation>
    <scope>NUCLEOTIDE SEQUENCE [LARGE SCALE GENOMIC DNA]</scope>
    <source>
        <strain>TPSY</strain>
    </source>
</reference>
<gene>
    <name evidence="1" type="primary">rpoC</name>
    <name type="ordered locus">Dtpsy_3245</name>
</gene>
<evidence type="ECO:0000255" key="1">
    <source>
        <dbReference type="HAMAP-Rule" id="MF_01322"/>
    </source>
</evidence>
<accession>B9MH46</accession>
<dbReference type="EC" id="2.7.7.6" evidence="1"/>
<dbReference type="EMBL" id="CP001392">
    <property type="protein sequence ID" value="ACM34674.1"/>
    <property type="molecule type" value="Genomic_DNA"/>
</dbReference>
<dbReference type="RefSeq" id="WP_015914491.1">
    <property type="nucleotide sequence ID" value="NC_011992.1"/>
</dbReference>
<dbReference type="SMR" id="B9MH46"/>
<dbReference type="GeneID" id="84683782"/>
<dbReference type="KEGG" id="dia:Dtpsy_3245"/>
<dbReference type="eggNOG" id="COG0086">
    <property type="taxonomic scope" value="Bacteria"/>
</dbReference>
<dbReference type="HOGENOM" id="CLU_000524_3_1_4"/>
<dbReference type="Proteomes" id="UP000000450">
    <property type="component" value="Chromosome"/>
</dbReference>
<dbReference type="GO" id="GO:0000428">
    <property type="term" value="C:DNA-directed RNA polymerase complex"/>
    <property type="evidence" value="ECO:0007669"/>
    <property type="project" value="UniProtKB-KW"/>
</dbReference>
<dbReference type="GO" id="GO:0003677">
    <property type="term" value="F:DNA binding"/>
    <property type="evidence" value="ECO:0007669"/>
    <property type="project" value="UniProtKB-UniRule"/>
</dbReference>
<dbReference type="GO" id="GO:0003899">
    <property type="term" value="F:DNA-directed RNA polymerase activity"/>
    <property type="evidence" value="ECO:0007669"/>
    <property type="project" value="UniProtKB-UniRule"/>
</dbReference>
<dbReference type="GO" id="GO:0000287">
    <property type="term" value="F:magnesium ion binding"/>
    <property type="evidence" value="ECO:0007669"/>
    <property type="project" value="UniProtKB-UniRule"/>
</dbReference>
<dbReference type="GO" id="GO:0008270">
    <property type="term" value="F:zinc ion binding"/>
    <property type="evidence" value="ECO:0007669"/>
    <property type="project" value="UniProtKB-UniRule"/>
</dbReference>
<dbReference type="GO" id="GO:0006351">
    <property type="term" value="P:DNA-templated transcription"/>
    <property type="evidence" value="ECO:0007669"/>
    <property type="project" value="UniProtKB-UniRule"/>
</dbReference>
<dbReference type="CDD" id="cd02655">
    <property type="entry name" value="RNAP_beta'_C"/>
    <property type="match status" value="1"/>
</dbReference>
<dbReference type="CDD" id="cd01609">
    <property type="entry name" value="RNAP_beta'_N"/>
    <property type="match status" value="1"/>
</dbReference>
<dbReference type="FunFam" id="1.10.132.30:FF:000003">
    <property type="entry name" value="DNA-directed RNA polymerase subunit beta"/>
    <property type="match status" value="1"/>
</dbReference>
<dbReference type="FunFam" id="1.10.150.390:FF:000002">
    <property type="entry name" value="DNA-directed RNA polymerase subunit beta"/>
    <property type="match status" value="1"/>
</dbReference>
<dbReference type="FunFam" id="4.10.860.120:FF:000001">
    <property type="entry name" value="DNA-directed RNA polymerase subunit beta"/>
    <property type="match status" value="1"/>
</dbReference>
<dbReference type="Gene3D" id="1.10.132.30">
    <property type="match status" value="1"/>
</dbReference>
<dbReference type="Gene3D" id="1.10.150.390">
    <property type="match status" value="1"/>
</dbReference>
<dbReference type="Gene3D" id="1.10.1790.20">
    <property type="match status" value="1"/>
</dbReference>
<dbReference type="Gene3D" id="1.10.40.90">
    <property type="match status" value="1"/>
</dbReference>
<dbReference type="Gene3D" id="2.40.40.20">
    <property type="match status" value="1"/>
</dbReference>
<dbReference type="Gene3D" id="2.40.50.100">
    <property type="match status" value="3"/>
</dbReference>
<dbReference type="Gene3D" id="4.10.860.120">
    <property type="entry name" value="RNA polymerase II, clamp domain"/>
    <property type="match status" value="1"/>
</dbReference>
<dbReference type="Gene3D" id="1.10.274.100">
    <property type="entry name" value="RNA polymerase Rpb1, domain 3"/>
    <property type="match status" value="1"/>
</dbReference>
<dbReference type="HAMAP" id="MF_01322">
    <property type="entry name" value="RNApol_bact_RpoC"/>
    <property type="match status" value="1"/>
</dbReference>
<dbReference type="InterPro" id="IPR045867">
    <property type="entry name" value="DNA-dir_RpoC_beta_prime"/>
</dbReference>
<dbReference type="InterPro" id="IPR012754">
    <property type="entry name" value="DNA-dir_RpoC_beta_prime_bact"/>
</dbReference>
<dbReference type="InterPro" id="IPR000722">
    <property type="entry name" value="RNA_pol_asu"/>
</dbReference>
<dbReference type="InterPro" id="IPR006592">
    <property type="entry name" value="RNA_pol_N"/>
</dbReference>
<dbReference type="InterPro" id="IPR007080">
    <property type="entry name" value="RNA_pol_Rpb1_1"/>
</dbReference>
<dbReference type="InterPro" id="IPR007066">
    <property type="entry name" value="RNA_pol_Rpb1_3"/>
</dbReference>
<dbReference type="InterPro" id="IPR042102">
    <property type="entry name" value="RNA_pol_Rpb1_3_sf"/>
</dbReference>
<dbReference type="InterPro" id="IPR007083">
    <property type="entry name" value="RNA_pol_Rpb1_4"/>
</dbReference>
<dbReference type="InterPro" id="IPR007081">
    <property type="entry name" value="RNA_pol_Rpb1_5"/>
</dbReference>
<dbReference type="InterPro" id="IPR044893">
    <property type="entry name" value="RNA_pol_Rpb1_clamp_domain"/>
</dbReference>
<dbReference type="InterPro" id="IPR038120">
    <property type="entry name" value="Rpb1_funnel_sf"/>
</dbReference>
<dbReference type="NCBIfam" id="TIGR02386">
    <property type="entry name" value="rpoC_TIGR"/>
    <property type="match status" value="1"/>
</dbReference>
<dbReference type="PANTHER" id="PTHR19376">
    <property type="entry name" value="DNA-DIRECTED RNA POLYMERASE"/>
    <property type="match status" value="1"/>
</dbReference>
<dbReference type="PANTHER" id="PTHR19376:SF54">
    <property type="entry name" value="DNA-DIRECTED RNA POLYMERASE SUBUNIT BETA"/>
    <property type="match status" value="1"/>
</dbReference>
<dbReference type="Pfam" id="PF04997">
    <property type="entry name" value="RNA_pol_Rpb1_1"/>
    <property type="match status" value="1"/>
</dbReference>
<dbReference type="Pfam" id="PF00623">
    <property type="entry name" value="RNA_pol_Rpb1_2"/>
    <property type="match status" value="2"/>
</dbReference>
<dbReference type="Pfam" id="PF04983">
    <property type="entry name" value="RNA_pol_Rpb1_3"/>
    <property type="match status" value="1"/>
</dbReference>
<dbReference type="Pfam" id="PF05000">
    <property type="entry name" value="RNA_pol_Rpb1_4"/>
    <property type="match status" value="1"/>
</dbReference>
<dbReference type="Pfam" id="PF04998">
    <property type="entry name" value="RNA_pol_Rpb1_5"/>
    <property type="match status" value="1"/>
</dbReference>
<dbReference type="SMART" id="SM00663">
    <property type="entry name" value="RPOLA_N"/>
    <property type="match status" value="1"/>
</dbReference>
<dbReference type="SUPFAM" id="SSF64484">
    <property type="entry name" value="beta and beta-prime subunits of DNA dependent RNA-polymerase"/>
    <property type="match status" value="1"/>
</dbReference>
<feature type="chain" id="PRO_1000165841" description="DNA-directed RNA polymerase subunit beta'">
    <location>
        <begin position="1"/>
        <end position="1409"/>
    </location>
</feature>
<feature type="binding site" evidence="1">
    <location>
        <position position="70"/>
    </location>
    <ligand>
        <name>Zn(2+)</name>
        <dbReference type="ChEBI" id="CHEBI:29105"/>
        <label>1</label>
    </ligand>
</feature>
<feature type="binding site" evidence="1">
    <location>
        <position position="72"/>
    </location>
    <ligand>
        <name>Zn(2+)</name>
        <dbReference type="ChEBI" id="CHEBI:29105"/>
        <label>1</label>
    </ligand>
</feature>
<feature type="binding site" evidence="1">
    <location>
        <position position="85"/>
    </location>
    <ligand>
        <name>Zn(2+)</name>
        <dbReference type="ChEBI" id="CHEBI:29105"/>
        <label>1</label>
    </ligand>
</feature>
<feature type="binding site" evidence="1">
    <location>
        <position position="88"/>
    </location>
    <ligand>
        <name>Zn(2+)</name>
        <dbReference type="ChEBI" id="CHEBI:29105"/>
        <label>1</label>
    </ligand>
</feature>
<feature type="binding site" evidence="1">
    <location>
        <position position="458"/>
    </location>
    <ligand>
        <name>Mg(2+)</name>
        <dbReference type="ChEBI" id="CHEBI:18420"/>
    </ligand>
</feature>
<feature type="binding site" evidence="1">
    <location>
        <position position="460"/>
    </location>
    <ligand>
        <name>Mg(2+)</name>
        <dbReference type="ChEBI" id="CHEBI:18420"/>
    </ligand>
</feature>
<feature type="binding site" evidence="1">
    <location>
        <position position="462"/>
    </location>
    <ligand>
        <name>Mg(2+)</name>
        <dbReference type="ChEBI" id="CHEBI:18420"/>
    </ligand>
</feature>
<feature type="binding site" evidence="1">
    <location>
        <position position="813"/>
    </location>
    <ligand>
        <name>Zn(2+)</name>
        <dbReference type="ChEBI" id="CHEBI:29105"/>
        <label>2</label>
    </ligand>
</feature>
<feature type="binding site" evidence="1">
    <location>
        <position position="887"/>
    </location>
    <ligand>
        <name>Zn(2+)</name>
        <dbReference type="ChEBI" id="CHEBI:29105"/>
        <label>2</label>
    </ligand>
</feature>
<feature type="binding site" evidence="1">
    <location>
        <position position="894"/>
    </location>
    <ligand>
        <name>Zn(2+)</name>
        <dbReference type="ChEBI" id="CHEBI:29105"/>
        <label>2</label>
    </ligand>
</feature>
<feature type="binding site" evidence="1">
    <location>
        <position position="897"/>
    </location>
    <ligand>
        <name>Zn(2+)</name>
        <dbReference type="ChEBI" id="CHEBI:29105"/>
        <label>2</label>
    </ligand>
</feature>
<sequence length="1409" mass="154551">MKSLLDLFKQFTPDEHFDAIKIGMASPEKIRSWSFGEVKKPETINYRTFKPERDGLFCAKIFGPIKDYECLCGKYKRLKHRGVICEKCGVEVTQTKVRRERMGHIDLAAPCAHIWFLKSLPSRLGLVLDMTLRDIERVLYFEAYVVTDPGMTPLKKFGIMSEDDYDAKRKEYGDEFVAKMGAEGIKELLEGIDIEIEIEKLRGDLTGSEVKVKKNAKRLKVLEAFKKSGIKPEWMILEVLPVLPPDLRPLVPLDGGRFATSDLNDLYRRVINRNSRLRRLLELKAPEIIARNEKRMLQEAVDSLLDNGRRGKAMTGANKRALKSLADMIKGKSGRFRQNLLGKRVDYSGRSVITVGPTLKLHQCGLPKLMALELFKPFIFSRLEAMGIATTIKAAKKEVEAGTPVVWDILEEVIKEHPVMLNRAPTLHRLGIQAFEPILIEGKAIQLHPLVCAAFNADFDGDQMAVHVPLSVEAQLEARTLMLASNNVLFPASGEPSIVPSQDVVLGLYHATREKINGKGEGLVFADTGEVQRALDAGEAELHAKISVRLTEWTKDKATGEFVPETKLVDTTVGRALLSEILPKGLPFSNLNKALKKKEISKLINASFRKCGLKDTVVFADKLLQNGFRLATHAGFSVAIDDMLVPPQKAEILARAEAEVKEIEQQYVSGLVTAGERYNKVVDIWGKAGDDVSKVMMDQLKVQKTIDRNGKEVNEESFNAIYMMADSGARGSAAQIRQLAGMRGLMAKPDGSIIETPITANFREGLNVLQYFISTHGARKGLADTALKTANSGYLTRRLVDVTQDLVVTEDDCGTSNGSLMRAIVEGGEVIESLRDRILGRTAAEEVLHPETRAVLAQPGRMLDEDLIEELEAAGVDEVKVRTALTCETRYGLCAKCYGRDLGRGGLINLGEAVGVIAAQSIGEPGTQLTMRTFHIGGAASRAAVASSVEAKSNGIIGFNATMRYVTNTKGELVVIARSGEIIIQDEHGRERERHKVPYGATLTVKADQTIKAGTILANWDPLTRPIITEYAGTVKFENVEEGLTVAKQVDEVTGLSTLVVIDPKRRGSAKVVRPQVKLVDADGKEVKIPGTDHSVTIGFQVGALIQVRDGQEVGPGEVLARIPMEGQKTRDITGGLPRVAELFEARSPKDKGMLAEMTGTISFGKETKGKVRLQITDPDGKVWDELVPKEKNVLVHEGQVVNKGELIVDGPADPQDILRLLGIEELSRYIVDEVQDVYRLQGVKINDKHIEVIVRQMLRRVVVENPGESTYIAGEQVERSEILNTNEALQAEGKLPATYSNVLLGITKASLSTDSFISAASFQETTRVLTEAAIMGKRDELRGLKENVIVGRLIPAGTGLAYHQARKAKDAMDEAERRAIADAEAAELASAGTDDAAAEIDGSADTAD</sequence>
<name>RPOC_ACIET</name>
<proteinExistence type="inferred from homology"/>
<keyword id="KW-0240">DNA-directed RNA polymerase</keyword>
<keyword id="KW-0460">Magnesium</keyword>
<keyword id="KW-0479">Metal-binding</keyword>
<keyword id="KW-0548">Nucleotidyltransferase</keyword>
<keyword id="KW-1185">Reference proteome</keyword>
<keyword id="KW-0804">Transcription</keyword>
<keyword id="KW-0808">Transferase</keyword>
<keyword id="KW-0862">Zinc</keyword>
<comment type="function">
    <text evidence="1">DNA-dependent RNA polymerase catalyzes the transcription of DNA into RNA using the four ribonucleoside triphosphates as substrates.</text>
</comment>
<comment type="catalytic activity">
    <reaction evidence="1">
        <text>RNA(n) + a ribonucleoside 5'-triphosphate = RNA(n+1) + diphosphate</text>
        <dbReference type="Rhea" id="RHEA:21248"/>
        <dbReference type="Rhea" id="RHEA-COMP:14527"/>
        <dbReference type="Rhea" id="RHEA-COMP:17342"/>
        <dbReference type="ChEBI" id="CHEBI:33019"/>
        <dbReference type="ChEBI" id="CHEBI:61557"/>
        <dbReference type="ChEBI" id="CHEBI:140395"/>
        <dbReference type="EC" id="2.7.7.6"/>
    </reaction>
</comment>
<comment type="cofactor">
    <cofactor evidence="1">
        <name>Mg(2+)</name>
        <dbReference type="ChEBI" id="CHEBI:18420"/>
    </cofactor>
    <text evidence="1">Binds 1 Mg(2+) ion per subunit.</text>
</comment>
<comment type="cofactor">
    <cofactor evidence="1">
        <name>Zn(2+)</name>
        <dbReference type="ChEBI" id="CHEBI:29105"/>
    </cofactor>
    <text evidence="1">Binds 2 Zn(2+) ions per subunit.</text>
</comment>
<comment type="subunit">
    <text evidence="1">The RNAP catalytic core consists of 2 alpha, 1 beta, 1 beta' and 1 omega subunit. When a sigma factor is associated with the core the holoenzyme is formed, which can initiate transcription.</text>
</comment>
<comment type="similarity">
    <text evidence="1">Belongs to the RNA polymerase beta' chain family.</text>
</comment>
<protein>
    <recommendedName>
        <fullName evidence="1">DNA-directed RNA polymerase subunit beta'</fullName>
        <shortName evidence="1">RNAP subunit beta'</shortName>
        <ecNumber evidence="1">2.7.7.6</ecNumber>
    </recommendedName>
    <alternativeName>
        <fullName evidence="1">RNA polymerase subunit beta'</fullName>
    </alternativeName>
    <alternativeName>
        <fullName evidence="1">Transcriptase subunit beta'</fullName>
    </alternativeName>
</protein>